<sequence length="321" mass="35538">MRAAINRANSLGGLFSFRFIRNIKSMSSSTSQDFVSRPVIKKVFAKLQKEGDGAVVRRGISRSEQKLLDPFLMLDEFSVSPPAGFPDHPHRGFETVTYVLEGGITHQDFKGHKGTIYAGDVQWMTAGRGIIHSEMPEEEVNKGLQLWINLSSNEKMIEPNYQELSHSDIPKAEQNGVEVKVIAGESMGIQSPVYTRTPTMFLDFTLQPGAQIHQNVPESWNAFAYILESGEGGGVFSSSNSSPIPAHSVVVFGPGNDGVSVWNKSSSKQLRFVLIAGEPIGEPVVQYGPFVMNTQAEIDMTIEDYHYGKNGFEMAKYWRSQ</sequence>
<protein>
    <recommendedName>
        <fullName evidence="4">Pirin-like protein 2</fullName>
    </recommendedName>
    <alternativeName>
        <fullName evidence="3">PIRIN2</fullName>
    </alternativeName>
    <alternativeName>
        <fullName evidence="4">Pirin-like protein At2g43120</fullName>
    </alternativeName>
</protein>
<accession>Q9ZW82</accession>
<accession>Q0WQ94</accession>
<proteinExistence type="evidence at protein level"/>
<name>PRNL2_ARATH</name>
<reference key="1">
    <citation type="journal article" date="1999" name="Nature">
        <title>Sequence and analysis of chromosome 2 of the plant Arabidopsis thaliana.</title>
        <authorList>
            <person name="Lin X."/>
            <person name="Kaul S."/>
            <person name="Rounsley S.D."/>
            <person name="Shea T.P."/>
            <person name="Benito M.-I."/>
            <person name="Town C.D."/>
            <person name="Fujii C.Y."/>
            <person name="Mason T.M."/>
            <person name="Bowman C.L."/>
            <person name="Barnstead M.E."/>
            <person name="Feldblyum T.V."/>
            <person name="Buell C.R."/>
            <person name="Ketchum K.A."/>
            <person name="Lee J.J."/>
            <person name="Ronning C.M."/>
            <person name="Koo H.L."/>
            <person name="Moffat K.S."/>
            <person name="Cronin L.A."/>
            <person name="Shen M."/>
            <person name="Pai G."/>
            <person name="Van Aken S."/>
            <person name="Umayam L."/>
            <person name="Tallon L.J."/>
            <person name="Gill J.E."/>
            <person name="Adams M.D."/>
            <person name="Carrera A.J."/>
            <person name="Creasy T.H."/>
            <person name="Goodman H.M."/>
            <person name="Somerville C.R."/>
            <person name="Copenhaver G.P."/>
            <person name="Preuss D."/>
            <person name="Nierman W.C."/>
            <person name="White O."/>
            <person name="Eisen J.A."/>
            <person name="Salzberg S.L."/>
            <person name="Fraser C.M."/>
            <person name="Venter J.C."/>
        </authorList>
    </citation>
    <scope>NUCLEOTIDE SEQUENCE [LARGE SCALE GENOMIC DNA]</scope>
    <source>
        <strain>cv. Columbia</strain>
    </source>
</reference>
<reference key="2">
    <citation type="journal article" date="2017" name="Plant J.">
        <title>Araport11: a complete reannotation of the Arabidopsis thaliana reference genome.</title>
        <authorList>
            <person name="Cheng C.Y."/>
            <person name="Krishnakumar V."/>
            <person name="Chan A.P."/>
            <person name="Thibaud-Nissen F."/>
            <person name="Schobel S."/>
            <person name="Town C.D."/>
        </authorList>
    </citation>
    <scope>GENOME REANNOTATION</scope>
    <source>
        <strain>cv. Columbia</strain>
    </source>
</reference>
<reference key="3">
    <citation type="submission" date="2006-07" db="EMBL/GenBank/DDBJ databases">
        <title>Large-scale analysis of RIKEN Arabidopsis full-length (RAFL) cDNAs.</title>
        <authorList>
            <person name="Totoki Y."/>
            <person name="Seki M."/>
            <person name="Ishida J."/>
            <person name="Nakajima M."/>
            <person name="Enju A."/>
            <person name="Kamiya A."/>
            <person name="Narusaka M."/>
            <person name="Shin-i T."/>
            <person name="Nakagawa M."/>
            <person name="Sakamoto N."/>
            <person name="Oishi K."/>
            <person name="Kohara Y."/>
            <person name="Kobayashi M."/>
            <person name="Toyoda A."/>
            <person name="Sakaki Y."/>
            <person name="Sakurai T."/>
            <person name="Iida K."/>
            <person name="Akiyama K."/>
            <person name="Satou M."/>
            <person name="Toyoda T."/>
            <person name="Konagaya A."/>
            <person name="Carninci P."/>
            <person name="Kawai J."/>
            <person name="Hayashizaki Y."/>
            <person name="Shinozaki K."/>
        </authorList>
    </citation>
    <scope>NUCLEOTIDE SEQUENCE [LARGE SCALE MRNA]</scope>
    <source>
        <strain>cv. Columbia</strain>
    </source>
</reference>
<reference key="4">
    <citation type="submission" date="2006-12" db="EMBL/GenBank/DDBJ databases">
        <title>Arabidopsis ORF clones.</title>
        <authorList>
            <person name="Bautista V.R."/>
            <person name="Kim C.J."/>
            <person name="Chen H."/>
            <person name="Quinitio C."/>
            <person name="Ecker J.R."/>
        </authorList>
    </citation>
    <scope>NUCLEOTIDE SEQUENCE [LARGE SCALE MRNA]</scope>
    <source>
        <strain>cv. Columbia</strain>
    </source>
</reference>
<reference key="5">
    <citation type="journal article" date="2014" name="Plant J.">
        <title>PIRIN2 stabilizes cysteine protease XCP2 and increases susceptibility to the vascular pathogen Ralstonia solanacearum in Arabidopsis.</title>
        <authorList>
            <person name="Zhang B."/>
            <person name="Tremousaygue D."/>
            <person name="Denance N."/>
            <person name="van Esse H.P."/>
            <person name="Hoerger A.C."/>
            <person name="Dabos P."/>
            <person name="Goffner D."/>
            <person name="Thomma B.P."/>
            <person name="van der Hoorn R.A."/>
            <person name="Tuominen H."/>
        </authorList>
    </citation>
    <scope>FUNCTION</scope>
    <scope>INTERACTION WITH RD21A; RD21B AND XCP2</scope>
    <scope>SUBCELLULAR LOCATION</scope>
    <scope>DISRUPTION PHENOTYPE</scope>
</reference>
<gene>
    <name evidence="3" type="primary">PRN2</name>
    <name type="ordered locus">At2g43120</name>
    <name type="ORF">F14B2.6</name>
</gene>
<dbReference type="EMBL" id="AC004450">
    <property type="status" value="NOT_ANNOTATED_CDS"/>
    <property type="molecule type" value="Genomic_DNA"/>
</dbReference>
<dbReference type="EMBL" id="CP002685">
    <property type="protein sequence ID" value="AEC10211.1"/>
    <property type="molecule type" value="Genomic_DNA"/>
</dbReference>
<dbReference type="EMBL" id="AK228809">
    <property type="protein sequence ID" value="BAF00705.1"/>
    <property type="molecule type" value="mRNA"/>
</dbReference>
<dbReference type="EMBL" id="BT029512">
    <property type="protein sequence ID" value="ABL66768.1"/>
    <property type="molecule type" value="mRNA"/>
</dbReference>
<dbReference type="PIR" id="C84862">
    <property type="entry name" value="C84862"/>
</dbReference>
<dbReference type="RefSeq" id="NP_850385.1">
    <property type="nucleotide sequence ID" value="NM_180054.2"/>
</dbReference>
<dbReference type="SMR" id="Q9ZW82"/>
<dbReference type="BioGRID" id="4251">
    <property type="interactions" value="2"/>
</dbReference>
<dbReference type="FunCoup" id="Q9ZW82">
    <property type="interactions" value="213"/>
</dbReference>
<dbReference type="STRING" id="3702.Q9ZW82"/>
<dbReference type="PaxDb" id="3702-AT2G43120.1"/>
<dbReference type="ProteomicsDB" id="234849"/>
<dbReference type="EnsemblPlants" id="AT2G43120.1">
    <property type="protein sequence ID" value="AT2G43120.1"/>
    <property type="gene ID" value="AT2G43120"/>
</dbReference>
<dbReference type="GeneID" id="818914"/>
<dbReference type="Gramene" id="AT2G43120.1">
    <property type="protein sequence ID" value="AT2G43120.1"/>
    <property type="gene ID" value="AT2G43120"/>
</dbReference>
<dbReference type="KEGG" id="ath:AT2G43120"/>
<dbReference type="Araport" id="AT2G43120"/>
<dbReference type="TAIR" id="AT2G43120">
    <property type="gene designation" value="PRN2"/>
</dbReference>
<dbReference type="eggNOG" id="ENOG502QQ5A">
    <property type="taxonomic scope" value="Eukaryota"/>
</dbReference>
<dbReference type="HOGENOM" id="CLU_045717_5_2_1"/>
<dbReference type="InParanoid" id="Q9ZW82"/>
<dbReference type="PhylomeDB" id="Q9ZW82"/>
<dbReference type="PRO" id="PR:Q9ZW82"/>
<dbReference type="Proteomes" id="UP000006548">
    <property type="component" value="Chromosome 2"/>
</dbReference>
<dbReference type="ExpressionAtlas" id="Q9ZW82">
    <property type="expression patterns" value="baseline and differential"/>
</dbReference>
<dbReference type="GO" id="GO:0005829">
    <property type="term" value="C:cytosol"/>
    <property type="evidence" value="ECO:0000314"/>
    <property type="project" value="UniProtKB"/>
</dbReference>
<dbReference type="GO" id="GO:0005634">
    <property type="term" value="C:nucleus"/>
    <property type="evidence" value="ECO:0000314"/>
    <property type="project" value="UniProtKB"/>
</dbReference>
<dbReference type="GO" id="GO:0046872">
    <property type="term" value="F:metal ion binding"/>
    <property type="evidence" value="ECO:0007669"/>
    <property type="project" value="UniProtKB-KW"/>
</dbReference>
<dbReference type="GO" id="GO:0030414">
    <property type="term" value="F:peptidase inhibitor activity"/>
    <property type="evidence" value="ECO:0000314"/>
    <property type="project" value="TAIR"/>
</dbReference>
<dbReference type="GO" id="GO:0042742">
    <property type="term" value="P:defense response to bacterium"/>
    <property type="evidence" value="ECO:0000316"/>
    <property type="project" value="TAIR"/>
</dbReference>
<dbReference type="CDD" id="cd02247">
    <property type="entry name" value="cupin_pirin_C"/>
    <property type="match status" value="1"/>
</dbReference>
<dbReference type="CDD" id="cd02909">
    <property type="entry name" value="cupin_pirin_N"/>
    <property type="match status" value="1"/>
</dbReference>
<dbReference type="FunFam" id="2.60.120.10:FF:000055">
    <property type="entry name" value="pirin"/>
    <property type="match status" value="1"/>
</dbReference>
<dbReference type="Gene3D" id="2.60.120.10">
    <property type="entry name" value="Jelly Rolls"/>
    <property type="match status" value="2"/>
</dbReference>
<dbReference type="InterPro" id="IPR012093">
    <property type="entry name" value="Pirin"/>
</dbReference>
<dbReference type="InterPro" id="IPR008778">
    <property type="entry name" value="Pirin_C_dom"/>
</dbReference>
<dbReference type="InterPro" id="IPR003829">
    <property type="entry name" value="Pirin_N_dom"/>
</dbReference>
<dbReference type="InterPro" id="IPR014710">
    <property type="entry name" value="RmlC-like_jellyroll"/>
</dbReference>
<dbReference type="InterPro" id="IPR011051">
    <property type="entry name" value="RmlC_Cupin_sf"/>
</dbReference>
<dbReference type="PANTHER" id="PTHR13903:SF8">
    <property type="entry name" value="PIRIN"/>
    <property type="match status" value="1"/>
</dbReference>
<dbReference type="PANTHER" id="PTHR13903">
    <property type="entry name" value="PIRIN-RELATED"/>
    <property type="match status" value="1"/>
</dbReference>
<dbReference type="Pfam" id="PF02678">
    <property type="entry name" value="Pirin"/>
    <property type="match status" value="1"/>
</dbReference>
<dbReference type="Pfam" id="PF05726">
    <property type="entry name" value="Pirin_C"/>
    <property type="match status" value="1"/>
</dbReference>
<dbReference type="PIRSF" id="PIRSF006232">
    <property type="entry name" value="Pirin"/>
    <property type="match status" value="1"/>
</dbReference>
<dbReference type="SUPFAM" id="SSF51182">
    <property type="entry name" value="RmlC-like cupins"/>
    <property type="match status" value="1"/>
</dbReference>
<organism>
    <name type="scientific">Arabidopsis thaliana</name>
    <name type="common">Mouse-ear cress</name>
    <dbReference type="NCBI Taxonomy" id="3702"/>
    <lineage>
        <taxon>Eukaryota</taxon>
        <taxon>Viridiplantae</taxon>
        <taxon>Streptophyta</taxon>
        <taxon>Embryophyta</taxon>
        <taxon>Tracheophyta</taxon>
        <taxon>Spermatophyta</taxon>
        <taxon>Magnoliopsida</taxon>
        <taxon>eudicotyledons</taxon>
        <taxon>Gunneridae</taxon>
        <taxon>Pentapetalae</taxon>
        <taxon>rosids</taxon>
        <taxon>malvids</taxon>
        <taxon>Brassicales</taxon>
        <taxon>Brassicaceae</taxon>
        <taxon>Camelineae</taxon>
        <taxon>Arabidopsis</taxon>
    </lineage>
</organism>
<evidence type="ECO:0000250" key="1">
    <source>
        <dbReference type="UniProtKB" id="O00625"/>
    </source>
</evidence>
<evidence type="ECO:0000269" key="2">
    <source>
    </source>
</evidence>
<evidence type="ECO:0000303" key="3">
    <source>
    </source>
</evidence>
<evidence type="ECO:0000305" key="4"/>
<keyword id="KW-0963">Cytoplasm</keyword>
<keyword id="KW-0408">Iron</keyword>
<keyword id="KW-0479">Metal-binding</keyword>
<keyword id="KW-0539">Nucleus</keyword>
<keyword id="KW-0611">Plant defense</keyword>
<keyword id="KW-1185">Reference proteome</keyword>
<feature type="chain" id="PRO_0000214056" description="Pirin-like protein 2">
    <location>
        <begin position="1"/>
        <end position="321"/>
    </location>
</feature>
<feature type="binding site" evidence="1">
    <location>
        <position position="88"/>
    </location>
    <ligand>
        <name>Fe cation</name>
        <dbReference type="ChEBI" id="CHEBI:24875"/>
    </ligand>
</feature>
<feature type="binding site" evidence="1">
    <location>
        <position position="90"/>
    </location>
    <ligand>
        <name>Fe cation</name>
        <dbReference type="ChEBI" id="CHEBI:24875"/>
    </ligand>
</feature>
<feature type="binding site" evidence="1">
    <location>
        <position position="132"/>
    </location>
    <ligand>
        <name>Fe cation</name>
        <dbReference type="ChEBI" id="CHEBI:24875"/>
    </ligand>
</feature>
<feature type="binding site" evidence="1">
    <location>
        <position position="134"/>
    </location>
    <ligand>
        <name>Fe cation</name>
        <dbReference type="ChEBI" id="CHEBI:24875"/>
    </ligand>
</feature>
<comment type="function">
    <text evidence="2">Involved in susceptibility to the bacterial plant pathogen Ralstonia solanacearum. Stabilizes the xylem cysteine protease XCP2 by blocking its autolysis.</text>
</comment>
<comment type="subunit">
    <text evidence="2">Interacts with RD21A, RD21B and XCP2.</text>
</comment>
<comment type="subcellular location">
    <subcellularLocation>
        <location evidence="2">Cytoplasm</location>
        <location evidence="2">Cytosol</location>
    </subcellularLocation>
    <subcellularLocation>
        <location evidence="2">Nucleus</location>
    </subcellularLocation>
</comment>
<comment type="disruption phenotype">
    <text evidence="2">No visible phenotype under normal growth conditions, but mutant plants show increased resistance to infection by the bacterial wilt pathogen Ralstonia solanacearum.</text>
</comment>
<comment type="similarity">
    <text evidence="4">Belongs to the pirin family.</text>
</comment>